<proteinExistence type="inferred from homology"/>
<dbReference type="EMBL" id="CP000736">
    <property type="protein sequence ID" value="ABR51872.1"/>
    <property type="molecule type" value="Genomic_DNA"/>
</dbReference>
<dbReference type="SMR" id="A6U0A4"/>
<dbReference type="KEGG" id="sah:SaurJH1_1016"/>
<dbReference type="HOGENOM" id="CLU_071496_2_1_9"/>
<dbReference type="GO" id="GO:0030674">
    <property type="term" value="F:protein-macromolecule adaptor activity"/>
    <property type="evidence" value="ECO:0007669"/>
    <property type="project" value="UniProtKB-UniRule"/>
</dbReference>
<dbReference type="Gene3D" id="3.30.70.1950">
    <property type="match status" value="1"/>
</dbReference>
<dbReference type="HAMAP" id="MF_01124">
    <property type="entry name" value="MecA"/>
    <property type="match status" value="1"/>
</dbReference>
<dbReference type="InterPro" id="IPR038471">
    <property type="entry name" value="MecA_C_sf"/>
</dbReference>
<dbReference type="InterPro" id="IPR008681">
    <property type="entry name" value="Neg-reg_MecA"/>
</dbReference>
<dbReference type="NCBIfam" id="NF002642">
    <property type="entry name" value="PRK02315.1-3"/>
    <property type="match status" value="1"/>
</dbReference>
<dbReference type="NCBIfam" id="NF002644">
    <property type="entry name" value="PRK02315.1-5"/>
    <property type="match status" value="1"/>
</dbReference>
<dbReference type="PANTHER" id="PTHR39161">
    <property type="entry name" value="ADAPTER PROTEIN MECA"/>
    <property type="match status" value="1"/>
</dbReference>
<dbReference type="PANTHER" id="PTHR39161:SF1">
    <property type="entry name" value="ADAPTER PROTEIN MECA 1"/>
    <property type="match status" value="1"/>
</dbReference>
<dbReference type="Pfam" id="PF05389">
    <property type="entry name" value="MecA"/>
    <property type="match status" value="1"/>
</dbReference>
<dbReference type="PIRSF" id="PIRSF029008">
    <property type="entry name" value="MecA"/>
    <property type="match status" value="1"/>
</dbReference>
<gene>
    <name evidence="1" type="primary">mecA</name>
    <name type="ordered locus">SaurJH1_1016</name>
</gene>
<feature type="chain" id="PRO_1000085009" description="Adapter protein MecA">
    <location>
        <begin position="1"/>
        <end position="239"/>
    </location>
</feature>
<feature type="region of interest" description="Disordered" evidence="2">
    <location>
        <begin position="118"/>
        <end position="137"/>
    </location>
</feature>
<feature type="compositionally biased region" description="Basic and acidic residues" evidence="2">
    <location>
        <begin position="118"/>
        <end position="128"/>
    </location>
</feature>
<accession>A6U0A4</accession>
<sequence length="239" mass="28285">MRIERVDDTTVKLFITYSDIEARGFSREDLWTNRKRGEEFFWSMMDEINEEEDFVVEGPLWIQVHAFEKGVEVTISKSKNEDMMNMSDDDATDQFDEQVQELLAQTLEGEDQLEELFEQRTKEKEAQGSKRQKSSARKNTRTIVVKFNDLEDVINYAYHSNPITTEFEDLLYMVDGTYYYAVHFDSHVDQEVINDSYSQLLEFAYPTDRTEVYLNDYAKIIMSHNVTAQVRRYFPETTE</sequence>
<evidence type="ECO:0000255" key="1">
    <source>
        <dbReference type="HAMAP-Rule" id="MF_01124"/>
    </source>
</evidence>
<evidence type="ECO:0000256" key="2">
    <source>
        <dbReference type="SAM" id="MobiDB-lite"/>
    </source>
</evidence>
<reference key="1">
    <citation type="submission" date="2007-06" db="EMBL/GenBank/DDBJ databases">
        <title>Complete sequence of chromosome of Staphylococcus aureus subsp. aureus JH1.</title>
        <authorList>
            <consortium name="US DOE Joint Genome Institute"/>
            <person name="Copeland A."/>
            <person name="Lucas S."/>
            <person name="Lapidus A."/>
            <person name="Barry K."/>
            <person name="Detter J.C."/>
            <person name="Glavina del Rio T."/>
            <person name="Hammon N."/>
            <person name="Israni S."/>
            <person name="Dalin E."/>
            <person name="Tice H."/>
            <person name="Pitluck S."/>
            <person name="Chain P."/>
            <person name="Malfatti S."/>
            <person name="Shin M."/>
            <person name="Vergez L."/>
            <person name="Schmutz J."/>
            <person name="Larimer F."/>
            <person name="Land M."/>
            <person name="Hauser L."/>
            <person name="Kyrpides N."/>
            <person name="Ivanova N."/>
            <person name="Tomasz A."/>
            <person name="Richardson P."/>
        </authorList>
    </citation>
    <scope>NUCLEOTIDE SEQUENCE [LARGE SCALE GENOMIC DNA]</scope>
    <source>
        <strain>JH1</strain>
    </source>
</reference>
<organism>
    <name type="scientific">Staphylococcus aureus (strain JH1)</name>
    <dbReference type="NCBI Taxonomy" id="359787"/>
    <lineage>
        <taxon>Bacteria</taxon>
        <taxon>Bacillati</taxon>
        <taxon>Bacillota</taxon>
        <taxon>Bacilli</taxon>
        <taxon>Bacillales</taxon>
        <taxon>Staphylococcaceae</taxon>
        <taxon>Staphylococcus</taxon>
    </lineage>
</organism>
<name>MECA_STAA2</name>
<protein>
    <recommendedName>
        <fullName evidence="1">Adapter protein MecA</fullName>
    </recommendedName>
</protein>
<comment type="function">
    <text evidence="1">Enables the recognition and targeting of unfolded and aggregated proteins to the ClpC protease or to other proteins involved in proteolysis.</text>
</comment>
<comment type="subunit">
    <text evidence="1">Homodimer.</text>
</comment>
<comment type="domain">
    <text>The N-terminal domain probably binds unfolded/aggregated proteins; the C-terminal domain interacts with ClpC.</text>
</comment>
<comment type="similarity">
    <text evidence="1">Belongs to the MecA family.</text>
</comment>